<evidence type="ECO:0000255" key="1">
    <source>
        <dbReference type="HAMAP-Rule" id="MF_00444"/>
    </source>
</evidence>
<sequence>MSFDNYLVPTVIEQSGRGERAFDIYSRLLKERIVFLVGPVTDESANLVVAQLLFLESENPDKDIFFYINSPGGSVTAGMSIYDTMNFIKPDVSTLCLGQAASMGAFLLSAGEKGKRFALPNSRIMIHQPLISGGLGGQASDIEIHARELLKIKEKLNRLMAKHCGRDLADLERDTDRDNFMSAEEAKEYGLIDQVLENRASLQL</sequence>
<name>CLPP_NEIMA</name>
<organism>
    <name type="scientific">Neisseria meningitidis serogroup A / serotype 4A (strain DSM 15465 / Z2491)</name>
    <dbReference type="NCBI Taxonomy" id="122587"/>
    <lineage>
        <taxon>Bacteria</taxon>
        <taxon>Pseudomonadati</taxon>
        <taxon>Pseudomonadota</taxon>
        <taxon>Betaproteobacteria</taxon>
        <taxon>Neisseriales</taxon>
        <taxon>Neisseriaceae</taxon>
        <taxon>Neisseria</taxon>
    </lineage>
</organism>
<proteinExistence type="inferred from homology"/>
<keyword id="KW-0963">Cytoplasm</keyword>
<keyword id="KW-0378">Hydrolase</keyword>
<keyword id="KW-0645">Protease</keyword>
<keyword id="KW-0720">Serine protease</keyword>
<dbReference type="EC" id="3.4.21.92" evidence="1"/>
<dbReference type="EMBL" id="AL157959">
    <property type="protein sequence ID" value="CAM08672.1"/>
    <property type="molecule type" value="Genomic_DNA"/>
</dbReference>
<dbReference type="PIR" id="A81844">
    <property type="entry name" value="A81844"/>
</dbReference>
<dbReference type="RefSeq" id="WP_002233970.1">
    <property type="nucleotide sequence ID" value="NC_003116.1"/>
</dbReference>
<dbReference type="SMR" id="Q9JU33"/>
<dbReference type="MEROPS" id="S14.001"/>
<dbReference type="EnsemblBacteria" id="CAM08672">
    <property type="protein sequence ID" value="CAM08672"/>
    <property type="gene ID" value="NMA1525"/>
</dbReference>
<dbReference type="GeneID" id="93385888"/>
<dbReference type="KEGG" id="nma:NMA1525"/>
<dbReference type="HOGENOM" id="CLU_058707_3_2_4"/>
<dbReference type="Proteomes" id="UP000000626">
    <property type="component" value="Chromosome"/>
</dbReference>
<dbReference type="GO" id="GO:0005737">
    <property type="term" value="C:cytoplasm"/>
    <property type="evidence" value="ECO:0007669"/>
    <property type="project" value="UniProtKB-SubCell"/>
</dbReference>
<dbReference type="GO" id="GO:0009368">
    <property type="term" value="C:endopeptidase Clp complex"/>
    <property type="evidence" value="ECO:0007669"/>
    <property type="project" value="TreeGrafter"/>
</dbReference>
<dbReference type="GO" id="GO:0004176">
    <property type="term" value="F:ATP-dependent peptidase activity"/>
    <property type="evidence" value="ECO:0007669"/>
    <property type="project" value="InterPro"/>
</dbReference>
<dbReference type="GO" id="GO:0051117">
    <property type="term" value="F:ATPase binding"/>
    <property type="evidence" value="ECO:0007669"/>
    <property type="project" value="TreeGrafter"/>
</dbReference>
<dbReference type="GO" id="GO:0004252">
    <property type="term" value="F:serine-type endopeptidase activity"/>
    <property type="evidence" value="ECO:0007669"/>
    <property type="project" value="UniProtKB-UniRule"/>
</dbReference>
<dbReference type="GO" id="GO:0006515">
    <property type="term" value="P:protein quality control for misfolded or incompletely synthesized proteins"/>
    <property type="evidence" value="ECO:0007669"/>
    <property type="project" value="TreeGrafter"/>
</dbReference>
<dbReference type="CDD" id="cd07017">
    <property type="entry name" value="S14_ClpP_2"/>
    <property type="match status" value="1"/>
</dbReference>
<dbReference type="FunFam" id="3.90.226.10:FF:000001">
    <property type="entry name" value="ATP-dependent Clp protease proteolytic subunit"/>
    <property type="match status" value="1"/>
</dbReference>
<dbReference type="Gene3D" id="3.90.226.10">
    <property type="entry name" value="2-enoyl-CoA Hydratase, Chain A, domain 1"/>
    <property type="match status" value="1"/>
</dbReference>
<dbReference type="HAMAP" id="MF_00444">
    <property type="entry name" value="ClpP"/>
    <property type="match status" value="1"/>
</dbReference>
<dbReference type="InterPro" id="IPR001907">
    <property type="entry name" value="ClpP"/>
</dbReference>
<dbReference type="InterPro" id="IPR029045">
    <property type="entry name" value="ClpP/crotonase-like_dom_sf"/>
</dbReference>
<dbReference type="InterPro" id="IPR023562">
    <property type="entry name" value="ClpP/TepA"/>
</dbReference>
<dbReference type="InterPro" id="IPR033135">
    <property type="entry name" value="ClpP_His_AS"/>
</dbReference>
<dbReference type="InterPro" id="IPR018215">
    <property type="entry name" value="ClpP_Ser_AS"/>
</dbReference>
<dbReference type="NCBIfam" id="TIGR00493">
    <property type="entry name" value="clpP"/>
    <property type="match status" value="1"/>
</dbReference>
<dbReference type="NCBIfam" id="NF001368">
    <property type="entry name" value="PRK00277.1"/>
    <property type="match status" value="1"/>
</dbReference>
<dbReference type="NCBIfam" id="NF009205">
    <property type="entry name" value="PRK12553.1"/>
    <property type="match status" value="1"/>
</dbReference>
<dbReference type="PANTHER" id="PTHR10381">
    <property type="entry name" value="ATP-DEPENDENT CLP PROTEASE PROTEOLYTIC SUBUNIT"/>
    <property type="match status" value="1"/>
</dbReference>
<dbReference type="PANTHER" id="PTHR10381:SF70">
    <property type="entry name" value="ATP-DEPENDENT CLP PROTEASE PROTEOLYTIC SUBUNIT"/>
    <property type="match status" value="1"/>
</dbReference>
<dbReference type="Pfam" id="PF00574">
    <property type="entry name" value="CLP_protease"/>
    <property type="match status" value="1"/>
</dbReference>
<dbReference type="PRINTS" id="PR00127">
    <property type="entry name" value="CLPPROTEASEP"/>
</dbReference>
<dbReference type="SUPFAM" id="SSF52096">
    <property type="entry name" value="ClpP/crotonase"/>
    <property type="match status" value="1"/>
</dbReference>
<dbReference type="PROSITE" id="PS00382">
    <property type="entry name" value="CLP_PROTEASE_HIS"/>
    <property type="match status" value="1"/>
</dbReference>
<dbReference type="PROSITE" id="PS00381">
    <property type="entry name" value="CLP_PROTEASE_SER"/>
    <property type="match status" value="1"/>
</dbReference>
<gene>
    <name evidence="1" type="primary">clpP</name>
    <name type="ordered locus">NMA1525</name>
</gene>
<reference key="1">
    <citation type="journal article" date="2000" name="Nature">
        <title>Complete DNA sequence of a serogroup A strain of Neisseria meningitidis Z2491.</title>
        <authorList>
            <person name="Parkhill J."/>
            <person name="Achtman M."/>
            <person name="James K.D."/>
            <person name="Bentley S.D."/>
            <person name="Churcher C.M."/>
            <person name="Klee S.R."/>
            <person name="Morelli G."/>
            <person name="Basham D."/>
            <person name="Brown D."/>
            <person name="Chillingworth T."/>
            <person name="Davies R.M."/>
            <person name="Davis P."/>
            <person name="Devlin K."/>
            <person name="Feltwell T."/>
            <person name="Hamlin N."/>
            <person name="Holroyd S."/>
            <person name="Jagels K."/>
            <person name="Leather S."/>
            <person name="Moule S."/>
            <person name="Mungall K.L."/>
            <person name="Quail M.A."/>
            <person name="Rajandream M.A."/>
            <person name="Rutherford K.M."/>
            <person name="Simmonds M."/>
            <person name="Skelton J."/>
            <person name="Whitehead S."/>
            <person name="Spratt B.G."/>
            <person name="Barrell B.G."/>
        </authorList>
    </citation>
    <scope>NUCLEOTIDE SEQUENCE [LARGE SCALE GENOMIC DNA]</scope>
    <source>
        <strain>DSM 15465 / Z2491</strain>
    </source>
</reference>
<protein>
    <recommendedName>
        <fullName evidence="1">ATP-dependent Clp protease proteolytic subunit</fullName>
        <ecNumber evidence="1">3.4.21.92</ecNumber>
    </recommendedName>
    <alternativeName>
        <fullName evidence="1">Endopeptidase Clp</fullName>
    </alternativeName>
</protein>
<accession>Q9JU33</accession>
<accession>A1ISB6</accession>
<comment type="function">
    <text evidence="1">Cleaves peptides in various proteins in a process that requires ATP hydrolysis. Has a chymotrypsin-like activity. Plays a major role in the degradation of misfolded proteins.</text>
</comment>
<comment type="catalytic activity">
    <reaction evidence="1">
        <text>Hydrolysis of proteins to small peptides in the presence of ATP and magnesium. alpha-casein is the usual test substrate. In the absence of ATP, only oligopeptides shorter than five residues are hydrolyzed (such as succinyl-Leu-Tyr-|-NHMec, and Leu-Tyr-Leu-|-Tyr-Trp, in which cleavage of the -Tyr-|-Leu- and -Tyr-|-Trp bonds also occurs).</text>
        <dbReference type="EC" id="3.4.21.92"/>
    </reaction>
</comment>
<comment type="subunit">
    <text evidence="1">Fourteen ClpP subunits assemble into 2 heptameric rings which stack back to back to give a disk-like structure with a central cavity, resembling the structure of eukaryotic proteasomes.</text>
</comment>
<comment type="subcellular location">
    <subcellularLocation>
        <location evidence="1">Cytoplasm</location>
    </subcellularLocation>
</comment>
<comment type="similarity">
    <text evidence="1">Belongs to the peptidase S14 family.</text>
</comment>
<feature type="chain" id="PRO_0000179601" description="ATP-dependent Clp protease proteolytic subunit">
    <location>
        <begin position="1"/>
        <end position="204"/>
    </location>
</feature>
<feature type="active site" description="Nucleophile" evidence="1">
    <location>
        <position position="102"/>
    </location>
</feature>
<feature type="active site" evidence="1">
    <location>
        <position position="127"/>
    </location>
</feature>